<keyword id="KW-0227">DNA damage</keyword>
<keyword id="KW-0233">DNA recombination</keyword>
<keyword id="KW-0234">DNA repair</keyword>
<keyword id="KW-0479">Metal-binding</keyword>
<keyword id="KW-1185">Reference proteome</keyword>
<keyword id="KW-0862">Zinc</keyword>
<keyword id="KW-0863">Zinc-finger</keyword>
<feature type="chain" id="PRO_1000001503" description="Recombination protein RecR">
    <location>
        <begin position="1"/>
        <end position="199"/>
    </location>
</feature>
<feature type="domain" description="Toprim" evidence="1">
    <location>
        <begin position="81"/>
        <end position="176"/>
    </location>
</feature>
<feature type="zinc finger region" description="C4-type" evidence="1">
    <location>
        <begin position="58"/>
        <end position="73"/>
    </location>
</feature>
<name>RECR_KORVE</name>
<organism>
    <name type="scientific">Koribacter versatilis (strain Ellin345)</name>
    <dbReference type="NCBI Taxonomy" id="204669"/>
    <lineage>
        <taxon>Bacteria</taxon>
        <taxon>Pseudomonadati</taxon>
        <taxon>Acidobacteriota</taxon>
        <taxon>Terriglobia</taxon>
        <taxon>Terriglobales</taxon>
        <taxon>Candidatus Korobacteraceae</taxon>
        <taxon>Candidatus Korobacter</taxon>
    </lineage>
</organism>
<evidence type="ECO:0000255" key="1">
    <source>
        <dbReference type="HAMAP-Rule" id="MF_00017"/>
    </source>
</evidence>
<reference key="1">
    <citation type="journal article" date="2009" name="Appl. Environ. Microbiol.">
        <title>Three genomes from the phylum Acidobacteria provide insight into the lifestyles of these microorganisms in soils.</title>
        <authorList>
            <person name="Ward N.L."/>
            <person name="Challacombe J.F."/>
            <person name="Janssen P.H."/>
            <person name="Henrissat B."/>
            <person name="Coutinho P.M."/>
            <person name="Wu M."/>
            <person name="Xie G."/>
            <person name="Haft D.H."/>
            <person name="Sait M."/>
            <person name="Badger J."/>
            <person name="Barabote R.D."/>
            <person name="Bradley B."/>
            <person name="Brettin T.S."/>
            <person name="Brinkac L.M."/>
            <person name="Bruce D."/>
            <person name="Creasy T."/>
            <person name="Daugherty S.C."/>
            <person name="Davidsen T.M."/>
            <person name="DeBoy R.T."/>
            <person name="Detter J.C."/>
            <person name="Dodson R.J."/>
            <person name="Durkin A.S."/>
            <person name="Ganapathy A."/>
            <person name="Gwinn-Giglio M."/>
            <person name="Han C.S."/>
            <person name="Khouri H."/>
            <person name="Kiss H."/>
            <person name="Kothari S.P."/>
            <person name="Madupu R."/>
            <person name="Nelson K.E."/>
            <person name="Nelson W.C."/>
            <person name="Paulsen I."/>
            <person name="Penn K."/>
            <person name="Ren Q."/>
            <person name="Rosovitz M.J."/>
            <person name="Selengut J.D."/>
            <person name="Shrivastava S."/>
            <person name="Sullivan S.A."/>
            <person name="Tapia R."/>
            <person name="Thompson L.S."/>
            <person name="Watkins K.L."/>
            <person name="Yang Q."/>
            <person name="Yu C."/>
            <person name="Zafar N."/>
            <person name="Zhou L."/>
            <person name="Kuske C.R."/>
        </authorList>
    </citation>
    <scope>NUCLEOTIDE SEQUENCE [LARGE SCALE GENOMIC DNA]</scope>
    <source>
        <strain>Ellin345</strain>
    </source>
</reference>
<proteinExistence type="inferred from homology"/>
<accession>Q1IQ76</accession>
<protein>
    <recommendedName>
        <fullName evidence="1">Recombination protein RecR</fullName>
    </recommendedName>
</protein>
<comment type="function">
    <text evidence="1">May play a role in DNA repair. It seems to be involved in an RecBC-independent recombinational process of DNA repair. It may act with RecF and RecO.</text>
</comment>
<comment type="similarity">
    <text evidence="1">Belongs to the RecR family.</text>
</comment>
<dbReference type="EMBL" id="CP000360">
    <property type="protein sequence ID" value="ABF40974.1"/>
    <property type="molecule type" value="Genomic_DNA"/>
</dbReference>
<dbReference type="RefSeq" id="WP_011522775.1">
    <property type="nucleotide sequence ID" value="NC_008009.1"/>
</dbReference>
<dbReference type="SMR" id="Q1IQ76"/>
<dbReference type="STRING" id="204669.Acid345_1973"/>
<dbReference type="EnsemblBacteria" id="ABF40974">
    <property type="protein sequence ID" value="ABF40974"/>
    <property type="gene ID" value="Acid345_1973"/>
</dbReference>
<dbReference type="KEGG" id="aba:Acid345_1973"/>
<dbReference type="eggNOG" id="COG0353">
    <property type="taxonomic scope" value="Bacteria"/>
</dbReference>
<dbReference type="HOGENOM" id="CLU_060739_1_0_0"/>
<dbReference type="OrthoDB" id="9802672at2"/>
<dbReference type="Proteomes" id="UP000002432">
    <property type="component" value="Chromosome"/>
</dbReference>
<dbReference type="GO" id="GO:0003677">
    <property type="term" value="F:DNA binding"/>
    <property type="evidence" value="ECO:0007669"/>
    <property type="project" value="UniProtKB-UniRule"/>
</dbReference>
<dbReference type="GO" id="GO:0008270">
    <property type="term" value="F:zinc ion binding"/>
    <property type="evidence" value="ECO:0007669"/>
    <property type="project" value="UniProtKB-KW"/>
</dbReference>
<dbReference type="GO" id="GO:0006310">
    <property type="term" value="P:DNA recombination"/>
    <property type="evidence" value="ECO:0007669"/>
    <property type="project" value="UniProtKB-UniRule"/>
</dbReference>
<dbReference type="GO" id="GO:0006281">
    <property type="term" value="P:DNA repair"/>
    <property type="evidence" value="ECO:0007669"/>
    <property type="project" value="UniProtKB-UniRule"/>
</dbReference>
<dbReference type="CDD" id="cd01025">
    <property type="entry name" value="TOPRIM_recR"/>
    <property type="match status" value="1"/>
</dbReference>
<dbReference type="Gene3D" id="3.30.60.80">
    <property type="match status" value="1"/>
</dbReference>
<dbReference type="Gene3D" id="3.40.1360.10">
    <property type="match status" value="1"/>
</dbReference>
<dbReference type="Gene3D" id="6.10.250.240">
    <property type="match status" value="1"/>
</dbReference>
<dbReference type="Gene3D" id="1.10.8.420">
    <property type="entry name" value="RecR Domain 1"/>
    <property type="match status" value="1"/>
</dbReference>
<dbReference type="HAMAP" id="MF_00017">
    <property type="entry name" value="RecR"/>
    <property type="match status" value="1"/>
</dbReference>
<dbReference type="InterPro" id="IPR000093">
    <property type="entry name" value="DNA_Rcmb_RecR"/>
</dbReference>
<dbReference type="InterPro" id="IPR023627">
    <property type="entry name" value="Rcmb_RecR"/>
</dbReference>
<dbReference type="InterPro" id="IPR015967">
    <property type="entry name" value="Rcmb_RecR_Znf"/>
</dbReference>
<dbReference type="InterPro" id="IPR006171">
    <property type="entry name" value="TOPRIM_dom"/>
</dbReference>
<dbReference type="InterPro" id="IPR034137">
    <property type="entry name" value="TOPRIM_RecR"/>
</dbReference>
<dbReference type="NCBIfam" id="TIGR00615">
    <property type="entry name" value="recR"/>
    <property type="match status" value="1"/>
</dbReference>
<dbReference type="PANTHER" id="PTHR30446">
    <property type="entry name" value="RECOMBINATION PROTEIN RECR"/>
    <property type="match status" value="1"/>
</dbReference>
<dbReference type="PANTHER" id="PTHR30446:SF0">
    <property type="entry name" value="RECOMBINATION PROTEIN RECR"/>
    <property type="match status" value="1"/>
</dbReference>
<dbReference type="Pfam" id="PF21175">
    <property type="entry name" value="RecR_C"/>
    <property type="match status" value="1"/>
</dbReference>
<dbReference type="Pfam" id="PF21176">
    <property type="entry name" value="RecR_HhH"/>
    <property type="match status" value="1"/>
</dbReference>
<dbReference type="Pfam" id="PF02132">
    <property type="entry name" value="RecR_ZnF"/>
    <property type="match status" value="1"/>
</dbReference>
<dbReference type="Pfam" id="PF13662">
    <property type="entry name" value="Toprim_4"/>
    <property type="match status" value="1"/>
</dbReference>
<dbReference type="SMART" id="SM00493">
    <property type="entry name" value="TOPRIM"/>
    <property type="match status" value="1"/>
</dbReference>
<dbReference type="SUPFAM" id="SSF111304">
    <property type="entry name" value="Recombination protein RecR"/>
    <property type="match status" value="1"/>
</dbReference>
<dbReference type="PROSITE" id="PS50880">
    <property type="entry name" value="TOPRIM"/>
    <property type="match status" value="1"/>
</dbReference>
<sequence>MSKFAEPMARLIDELKKLPGVGNKSAQRLAFHILRSSNDDAELLADAVRDVKAKLRLCSICNNITDVDPCTYCANPTRNQQVICVVEEPTNISAVEKTRHFNGVYHVLHGALSPLHGVGPEHLRISNLIKRVEGGKAEEVILATNPTVEGEATATYLSKILKAEGVRVTRIATGVPVGSDIEYADEVTMQKAMEGRREL</sequence>
<gene>
    <name evidence="1" type="primary">recR</name>
    <name type="ordered locus">Acid345_1973</name>
</gene>